<evidence type="ECO:0000255" key="1">
    <source>
        <dbReference type="HAMAP-Rule" id="MF_01864"/>
    </source>
</evidence>
<evidence type="ECO:0000255" key="2">
    <source>
        <dbReference type="PROSITE-ProRule" id="PRU01266"/>
    </source>
</evidence>
<accession>Q12R22</accession>
<gene>
    <name evidence="1" type="primary">miaB</name>
    <name type="ordered locus">Sden_0815</name>
</gene>
<reference key="1">
    <citation type="submission" date="2006-03" db="EMBL/GenBank/DDBJ databases">
        <title>Complete sequence of Shewanella denitrificans OS217.</title>
        <authorList>
            <consortium name="US DOE Joint Genome Institute"/>
            <person name="Copeland A."/>
            <person name="Lucas S."/>
            <person name="Lapidus A."/>
            <person name="Barry K."/>
            <person name="Detter J.C."/>
            <person name="Glavina del Rio T."/>
            <person name="Hammon N."/>
            <person name="Israni S."/>
            <person name="Dalin E."/>
            <person name="Tice H."/>
            <person name="Pitluck S."/>
            <person name="Brettin T."/>
            <person name="Bruce D."/>
            <person name="Han C."/>
            <person name="Tapia R."/>
            <person name="Gilna P."/>
            <person name="Kiss H."/>
            <person name="Schmutz J."/>
            <person name="Larimer F."/>
            <person name="Land M."/>
            <person name="Hauser L."/>
            <person name="Kyrpides N."/>
            <person name="Lykidis A."/>
            <person name="Richardson P."/>
        </authorList>
    </citation>
    <scope>NUCLEOTIDE SEQUENCE [LARGE SCALE GENOMIC DNA]</scope>
    <source>
        <strain>OS217 / ATCC BAA-1090 / DSM 15013</strain>
    </source>
</reference>
<sequence>MSKKLHIKTWGCQMNEYDSSKMADLLDEYQGYTLTDDATEADVLLLNTCSIREKAQEKVFHQLGRWKTLKDKKPGLIIGVGGCVASQEGKAIKDRAQCVDIIFGPQTLHRLPEMIDQVQRGEKVVIDVSFPEIEKFDRLPEPRADGPTAFVSIMEGCSKYCSFCVVPYTRGEEVSRPQDDIILEIAQLAEQGVREVNLLGQNVNAYRGATHDDQICTFAELLRLVASIDGIDRIRFTTSHPIEFTQDIIDVYEDTPELVSFLHLPVQSGSDRILTQMKRGHMAIEYKSIIRRLRKAREGIQISSDFIIGFPGESAEDFADTMKLIEDVAFDHSFSFIYSARPGTPAADLPDDVSDEEKKQRLAILQDRITQQAMRYSRQMLGTVQRILVEGPSVKNPMELRGRTENNRVVNFEAPHTHIGSFVDVEIVDVYTNSLRGIFIRGEAEMDLRRSLRPADILAKHKQDDVLGVTQFTP</sequence>
<feature type="chain" id="PRO_0000374537" description="tRNA-2-methylthio-N(6)-dimethylallyladenosine synthase">
    <location>
        <begin position="1"/>
        <end position="474"/>
    </location>
</feature>
<feature type="domain" description="MTTase N-terminal" evidence="1">
    <location>
        <begin position="3"/>
        <end position="120"/>
    </location>
</feature>
<feature type="domain" description="Radical SAM core" evidence="2">
    <location>
        <begin position="143"/>
        <end position="375"/>
    </location>
</feature>
<feature type="domain" description="TRAM" evidence="1">
    <location>
        <begin position="378"/>
        <end position="441"/>
    </location>
</feature>
<feature type="binding site" evidence="1">
    <location>
        <position position="12"/>
    </location>
    <ligand>
        <name>[4Fe-4S] cluster</name>
        <dbReference type="ChEBI" id="CHEBI:49883"/>
        <label>1</label>
    </ligand>
</feature>
<feature type="binding site" evidence="1">
    <location>
        <position position="49"/>
    </location>
    <ligand>
        <name>[4Fe-4S] cluster</name>
        <dbReference type="ChEBI" id="CHEBI:49883"/>
        <label>1</label>
    </ligand>
</feature>
<feature type="binding site" evidence="1">
    <location>
        <position position="83"/>
    </location>
    <ligand>
        <name>[4Fe-4S] cluster</name>
        <dbReference type="ChEBI" id="CHEBI:49883"/>
        <label>1</label>
    </ligand>
</feature>
<feature type="binding site" evidence="1">
    <location>
        <position position="157"/>
    </location>
    <ligand>
        <name>[4Fe-4S] cluster</name>
        <dbReference type="ChEBI" id="CHEBI:49883"/>
        <label>2</label>
        <note>4Fe-4S-S-AdoMet</note>
    </ligand>
</feature>
<feature type="binding site" evidence="1">
    <location>
        <position position="161"/>
    </location>
    <ligand>
        <name>[4Fe-4S] cluster</name>
        <dbReference type="ChEBI" id="CHEBI:49883"/>
        <label>2</label>
        <note>4Fe-4S-S-AdoMet</note>
    </ligand>
</feature>
<feature type="binding site" evidence="1">
    <location>
        <position position="164"/>
    </location>
    <ligand>
        <name>[4Fe-4S] cluster</name>
        <dbReference type="ChEBI" id="CHEBI:49883"/>
        <label>2</label>
        <note>4Fe-4S-S-AdoMet</note>
    </ligand>
</feature>
<dbReference type="EC" id="2.8.4.3" evidence="1"/>
<dbReference type="EMBL" id="CP000302">
    <property type="protein sequence ID" value="ABE54104.1"/>
    <property type="molecule type" value="Genomic_DNA"/>
</dbReference>
<dbReference type="RefSeq" id="WP_011495269.1">
    <property type="nucleotide sequence ID" value="NC_007954.1"/>
</dbReference>
<dbReference type="SMR" id="Q12R22"/>
<dbReference type="STRING" id="318161.Sden_0815"/>
<dbReference type="KEGG" id="sdn:Sden_0815"/>
<dbReference type="eggNOG" id="COG0621">
    <property type="taxonomic scope" value="Bacteria"/>
</dbReference>
<dbReference type="HOGENOM" id="CLU_018697_2_0_6"/>
<dbReference type="OrthoDB" id="9805215at2"/>
<dbReference type="Proteomes" id="UP000001982">
    <property type="component" value="Chromosome"/>
</dbReference>
<dbReference type="GO" id="GO:0005829">
    <property type="term" value="C:cytosol"/>
    <property type="evidence" value="ECO:0007669"/>
    <property type="project" value="TreeGrafter"/>
</dbReference>
<dbReference type="GO" id="GO:0051539">
    <property type="term" value="F:4 iron, 4 sulfur cluster binding"/>
    <property type="evidence" value="ECO:0007669"/>
    <property type="project" value="UniProtKB-UniRule"/>
</dbReference>
<dbReference type="GO" id="GO:0046872">
    <property type="term" value="F:metal ion binding"/>
    <property type="evidence" value="ECO:0007669"/>
    <property type="project" value="UniProtKB-KW"/>
</dbReference>
<dbReference type="GO" id="GO:0035597">
    <property type="term" value="F:N6-isopentenyladenosine methylthiotransferase activity"/>
    <property type="evidence" value="ECO:0007669"/>
    <property type="project" value="TreeGrafter"/>
</dbReference>
<dbReference type="CDD" id="cd01335">
    <property type="entry name" value="Radical_SAM"/>
    <property type="match status" value="1"/>
</dbReference>
<dbReference type="FunFam" id="3.40.50.12160:FF:000001">
    <property type="entry name" value="tRNA-2-methylthio-N(6)-dimethylallyladenosine synthase"/>
    <property type="match status" value="1"/>
</dbReference>
<dbReference type="FunFam" id="3.80.30.20:FF:000001">
    <property type="entry name" value="tRNA-2-methylthio-N(6)-dimethylallyladenosine synthase 2"/>
    <property type="match status" value="1"/>
</dbReference>
<dbReference type="Gene3D" id="3.40.50.12160">
    <property type="entry name" value="Methylthiotransferase, N-terminal domain"/>
    <property type="match status" value="1"/>
</dbReference>
<dbReference type="Gene3D" id="3.80.30.20">
    <property type="entry name" value="tm_1862 like domain"/>
    <property type="match status" value="1"/>
</dbReference>
<dbReference type="HAMAP" id="MF_01864">
    <property type="entry name" value="tRNA_metthiotr_MiaB"/>
    <property type="match status" value="1"/>
</dbReference>
<dbReference type="InterPro" id="IPR006638">
    <property type="entry name" value="Elp3/MiaA/NifB-like_rSAM"/>
</dbReference>
<dbReference type="InterPro" id="IPR005839">
    <property type="entry name" value="Methylthiotransferase"/>
</dbReference>
<dbReference type="InterPro" id="IPR020612">
    <property type="entry name" value="Methylthiotransferase_CS"/>
</dbReference>
<dbReference type="InterPro" id="IPR013848">
    <property type="entry name" value="Methylthiotransferase_N"/>
</dbReference>
<dbReference type="InterPro" id="IPR038135">
    <property type="entry name" value="Methylthiotransferase_N_sf"/>
</dbReference>
<dbReference type="InterPro" id="IPR006463">
    <property type="entry name" value="MiaB_methiolase"/>
</dbReference>
<dbReference type="InterPro" id="IPR007197">
    <property type="entry name" value="rSAM"/>
</dbReference>
<dbReference type="InterPro" id="IPR023404">
    <property type="entry name" value="rSAM_horseshoe"/>
</dbReference>
<dbReference type="InterPro" id="IPR002792">
    <property type="entry name" value="TRAM_dom"/>
</dbReference>
<dbReference type="NCBIfam" id="TIGR01574">
    <property type="entry name" value="miaB-methiolase"/>
    <property type="match status" value="1"/>
</dbReference>
<dbReference type="NCBIfam" id="TIGR00089">
    <property type="entry name" value="MiaB/RimO family radical SAM methylthiotransferase"/>
    <property type="match status" value="1"/>
</dbReference>
<dbReference type="PANTHER" id="PTHR43020">
    <property type="entry name" value="CDK5 REGULATORY SUBUNIT-ASSOCIATED PROTEIN 1"/>
    <property type="match status" value="1"/>
</dbReference>
<dbReference type="PANTHER" id="PTHR43020:SF2">
    <property type="entry name" value="MITOCHONDRIAL TRNA METHYLTHIOTRANSFERASE CDK5RAP1"/>
    <property type="match status" value="1"/>
</dbReference>
<dbReference type="Pfam" id="PF04055">
    <property type="entry name" value="Radical_SAM"/>
    <property type="match status" value="1"/>
</dbReference>
<dbReference type="Pfam" id="PF01938">
    <property type="entry name" value="TRAM"/>
    <property type="match status" value="1"/>
</dbReference>
<dbReference type="Pfam" id="PF00919">
    <property type="entry name" value="UPF0004"/>
    <property type="match status" value="1"/>
</dbReference>
<dbReference type="SFLD" id="SFLDF00273">
    <property type="entry name" value="(dimethylallyl)adenosine_tRNA"/>
    <property type="match status" value="1"/>
</dbReference>
<dbReference type="SFLD" id="SFLDG01082">
    <property type="entry name" value="B12-binding_domain_containing"/>
    <property type="match status" value="1"/>
</dbReference>
<dbReference type="SFLD" id="SFLDG01061">
    <property type="entry name" value="methylthiotransferase"/>
    <property type="match status" value="1"/>
</dbReference>
<dbReference type="SMART" id="SM00729">
    <property type="entry name" value="Elp3"/>
    <property type="match status" value="1"/>
</dbReference>
<dbReference type="SUPFAM" id="SSF102114">
    <property type="entry name" value="Radical SAM enzymes"/>
    <property type="match status" value="1"/>
</dbReference>
<dbReference type="PROSITE" id="PS51449">
    <property type="entry name" value="MTTASE_N"/>
    <property type="match status" value="1"/>
</dbReference>
<dbReference type="PROSITE" id="PS01278">
    <property type="entry name" value="MTTASE_RADICAL"/>
    <property type="match status" value="1"/>
</dbReference>
<dbReference type="PROSITE" id="PS51918">
    <property type="entry name" value="RADICAL_SAM"/>
    <property type="match status" value="1"/>
</dbReference>
<dbReference type="PROSITE" id="PS50926">
    <property type="entry name" value="TRAM"/>
    <property type="match status" value="1"/>
</dbReference>
<name>MIAB_SHEDO</name>
<organism>
    <name type="scientific">Shewanella denitrificans (strain OS217 / ATCC BAA-1090 / DSM 15013)</name>
    <dbReference type="NCBI Taxonomy" id="318161"/>
    <lineage>
        <taxon>Bacteria</taxon>
        <taxon>Pseudomonadati</taxon>
        <taxon>Pseudomonadota</taxon>
        <taxon>Gammaproteobacteria</taxon>
        <taxon>Alteromonadales</taxon>
        <taxon>Shewanellaceae</taxon>
        <taxon>Shewanella</taxon>
    </lineage>
</organism>
<protein>
    <recommendedName>
        <fullName evidence="1">tRNA-2-methylthio-N(6)-dimethylallyladenosine synthase</fullName>
        <ecNumber evidence="1">2.8.4.3</ecNumber>
    </recommendedName>
    <alternativeName>
        <fullName evidence="1">(Dimethylallyl)adenosine tRNA methylthiotransferase MiaB</fullName>
    </alternativeName>
    <alternativeName>
        <fullName evidence="1">tRNA-i(6)A37 methylthiotransferase</fullName>
    </alternativeName>
</protein>
<keyword id="KW-0004">4Fe-4S</keyword>
<keyword id="KW-0963">Cytoplasm</keyword>
<keyword id="KW-0408">Iron</keyword>
<keyword id="KW-0411">Iron-sulfur</keyword>
<keyword id="KW-0479">Metal-binding</keyword>
<keyword id="KW-1185">Reference proteome</keyword>
<keyword id="KW-0949">S-adenosyl-L-methionine</keyword>
<keyword id="KW-0808">Transferase</keyword>
<keyword id="KW-0819">tRNA processing</keyword>
<proteinExistence type="inferred from homology"/>
<comment type="function">
    <text evidence="1">Catalyzes the methylthiolation of N6-(dimethylallyl)adenosine (i(6)A), leading to the formation of 2-methylthio-N6-(dimethylallyl)adenosine (ms(2)i(6)A) at position 37 in tRNAs that read codons beginning with uridine.</text>
</comment>
<comment type="catalytic activity">
    <reaction evidence="1">
        <text>N(6)-dimethylallyladenosine(37) in tRNA + (sulfur carrier)-SH + AH2 + 2 S-adenosyl-L-methionine = 2-methylsulfanyl-N(6)-dimethylallyladenosine(37) in tRNA + (sulfur carrier)-H + 5'-deoxyadenosine + L-methionine + A + S-adenosyl-L-homocysteine + 2 H(+)</text>
        <dbReference type="Rhea" id="RHEA:37067"/>
        <dbReference type="Rhea" id="RHEA-COMP:10375"/>
        <dbReference type="Rhea" id="RHEA-COMP:10376"/>
        <dbReference type="Rhea" id="RHEA-COMP:14737"/>
        <dbReference type="Rhea" id="RHEA-COMP:14739"/>
        <dbReference type="ChEBI" id="CHEBI:13193"/>
        <dbReference type="ChEBI" id="CHEBI:15378"/>
        <dbReference type="ChEBI" id="CHEBI:17319"/>
        <dbReference type="ChEBI" id="CHEBI:17499"/>
        <dbReference type="ChEBI" id="CHEBI:29917"/>
        <dbReference type="ChEBI" id="CHEBI:57844"/>
        <dbReference type="ChEBI" id="CHEBI:57856"/>
        <dbReference type="ChEBI" id="CHEBI:59789"/>
        <dbReference type="ChEBI" id="CHEBI:64428"/>
        <dbReference type="ChEBI" id="CHEBI:74415"/>
        <dbReference type="ChEBI" id="CHEBI:74417"/>
        <dbReference type="EC" id="2.8.4.3"/>
    </reaction>
</comment>
<comment type="cofactor">
    <cofactor evidence="1">
        <name>[4Fe-4S] cluster</name>
        <dbReference type="ChEBI" id="CHEBI:49883"/>
    </cofactor>
    <text evidence="1">Binds 2 [4Fe-4S] clusters. One cluster is coordinated with 3 cysteines and an exchangeable S-adenosyl-L-methionine.</text>
</comment>
<comment type="subunit">
    <text evidence="1">Monomer.</text>
</comment>
<comment type="subcellular location">
    <subcellularLocation>
        <location evidence="1">Cytoplasm</location>
    </subcellularLocation>
</comment>
<comment type="similarity">
    <text evidence="1">Belongs to the methylthiotransferase family. MiaB subfamily.</text>
</comment>